<reference key="1">
    <citation type="journal article" date="2002" name="DNA Res.">
        <title>Complete genome structure of the thermophilic cyanobacterium Thermosynechococcus elongatus BP-1.</title>
        <authorList>
            <person name="Nakamura Y."/>
            <person name="Kaneko T."/>
            <person name="Sato S."/>
            <person name="Ikeuchi M."/>
            <person name="Katoh H."/>
            <person name="Sasamoto S."/>
            <person name="Watanabe A."/>
            <person name="Iriguchi M."/>
            <person name="Kawashima K."/>
            <person name="Kimura T."/>
            <person name="Kishida Y."/>
            <person name="Kiyokawa C."/>
            <person name="Kohara M."/>
            <person name="Matsumoto M."/>
            <person name="Matsuno A."/>
            <person name="Nakazaki N."/>
            <person name="Shimpo S."/>
            <person name="Sugimoto M."/>
            <person name="Takeuchi C."/>
            <person name="Yamada M."/>
            <person name="Tabata S."/>
        </authorList>
    </citation>
    <scope>NUCLEOTIDE SEQUENCE [LARGE SCALE GENOMIC DNA]</scope>
    <source>
        <strain>NIES-2133 / IAM M-273 / BP-1</strain>
    </source>
</reference>
<accession>Q8DLD1</accession>
<evidence type="ECO:0000255" key="1">
    <source>
        <dbReference type="HAMAP-Rule" id="MF_00386"/>
    </source>
</evidence>
<proteinExistence type="inferred from homology"/>
<sequence>MGNGLSKALIVLIRIYQRWISPLFLPTCRYTPSCSAYAVEAIARYGAVKGTYLAIRRILRCHPFAVGGYDPVPTTCPDPCNESSPPNPPC</sequence>
<feature type="chain" id="PRO_0000171887" description="Putative membrane protein insertion efficiency factor">
    <location>
        <begin position="1"/>
        <end position="90"/>
    </location>
</feature>
<gene>
    <name type="ordered locus">tsr0564</name>
</gene>
<dbReference type="EMBL" id="BA000039">
    <property type="protein sequence ID" value="BAC08116.1"/>
    <property type="molecule type" value="Genomic_DNA"/>
</dbReference>
<dbReference type="RefSeq" id="NP_681354.1">
    <property type="nucleotide sequence ID" value="NC_004113.1"/>
</dbReference>
<dbReference type="RefSeq" id="WP_011056412.1">
    <property type="nucleotide sequence ID" value="NC_004113.1"/>
</dbReference>
<dbReference type="STRING" id="197221.gene:10747154"/>
<dbReference type="EnsemblBacteria" id="BAC08116">
    <property type="protein sequence ID" value="BAC08116"/>
    <property type="gene ID" value="BAC08116"/>
</dbReference>
<dbReference type="KEGG" id="tel:tsr0564"/>
<dbReference type="PATRIC" id="fig|197221.4.peg.596"/>
<dbReference type="eggNOG" id="COG0759">
    <property type="taxonomic scope" value="Bacteria"/>
</dbReference>
<dbReference type="Proteomes" id="UP000000440">
    <property type="component" value="Chromosome"/>
</dbReference>
<dbReference type="GO" id="GO:0005886">
    <property type="term" value="C:plasma membrane"/>
    <property type="evidence" value="ECO:0007669"/>
    <property type="project" value="UniProtKB-SubCell"/>
</dbReference>
<dbReference type="HAMAP" id="MF_00386">
    <property type="entry name" value="UPF0161_YidD"/>
    <property type="match status" value="1"/>
</dbReference>
<dbReference type="InterPro" id="IPR002696">
    <property type="entry name" value="Membr_insert_effic_factor_YidD"/>
</dbReference>
<dbReference type="NCBIfam" id="TIGR00278">
    <property type="entry name" value="membrane protein insertion efficiency factor YidD"/>
    <property type="match status" value="1"/>
</dbReference>
<dbReference type="PANTHER" id="PTHR33383">
    <property type="entry name" value="MEMBRANE PROTEIN INSERTION EFFICIENCY FACTOR-RELATED"/>
    <property type="match status" value="1"/>
</dbReference>
<dbReference type="PANTHER" id="PTHR33383:SF1">
    <property type="entry name" value="MEMBRANE PROTEIN INSERTION EFFICIENCY FACTOR-RELATED"/>
    <property type="match status" value="1"/>
</dbReference>
<dbReference type="Pfam" id="PF01809">
    <property type="entry name" value="YidD"/>
    <property type="match status" value="1"/>
</dbReference>
<dbReference type="SMART" id="SM01234">
    <property type="entry name" value="Haemolytic"/>
    <property type="match status" value="1"/>
</dbReference>
<comment type="function">
    <text evidence="1">Could be involved in insertion of integral membrane proteins into the membrane.</text>
</comment>
<comment type="subcellular location">
    <subcellularLocation>
        <location evidence="1">Cell inner membrane</location>
        <topology evidence="1">Peripheral membrane protein</topology>
        <orientation evidence="1">Cytoplasmic side</orientation>
    </subcellularLocation>
</comment>
<comment type="similarity">
    <text evidence="1">Belongs to the UPF0161 family.</text>
</comment>
<protein>
    <recommendedName>
        <fullName evidence="1">Putative membrane protein insertion efficiency factor</fullName>
    </recommendedName>
</protein>
<name>YIDD_THEVB</name>
<keyword id="KW-0997">Cell inner membrane</keyword>
<keyword id="KW-1003">Cell membrane</keyword>
<keyword id="KW-0472">Membrane</keyword>
<keyword id="KW-1185">Reference proteome</keyword>
<organism>
    <name type="scientific">Thermosynechococcus vestitus (strain NIES-2133 / IAM M-273 / BP-1)</name>
    <dbReference type="NCBI Taxonomy" id="197221"/>
    <lineage>
        <taxon>Bacteria</taxon>
        <taxon>Bacillati</taxon>
        <taxon>Cyanobacteriota</taxon>
        <taxon>Cyanophyceae</taxon>
        <taxon>Acaryochloridales</taxon>
        <taxon>Thermosynechococcaceae</taxon>
        <taxon>Thermosynechococcus</taxon>
    </lineage>
</organism>